<proteinExistence type="inferred from homology"/>
<organismHost>
    <name type="scientific">Arachis hypogaea</name>
    <name type="common">Peanut</name>
    <dbReference type="NCBI Taxonomy" id="3818"/>
</organismHost>
<organismHost>
    <name type="scientific">Canna</name>
    <dbReference type="NCBI Taxonomy" id="4627"/>
</organismHost>
<organismHost>
    <name type="scientific">Crotalaria</name>
    <dbReference type="NCBI Taxonomy" id="3828"/>
</organismHost>
<organismHost>
    <name type="scientific">Eustoma</name>
    <dbReference type="NCBI Taxonomy" id="52517"/>
</organismHost>
<organismHost>
    <name type="scientific">Freesia</name>
    <dbReference type="NCBI Taxonomy" id="58987"/>
</organismHost>
<organismHost>
    <name type="scientific">Gladiolus</name>
    <dbReference type="NCBI Taxonomy" id="49747"/>
</organismHost>
<organismHost>
    <name type="scientific">Glycine max</name>
    <name type="common">Soybean</name>
    <name type="synonym">Glycine hispida</name>
    <dbReference type="NCBI Taxonomy" id="3847"/>
</organismHost>
<organismHost>
    <name type="scientific">Lupinus luteus</name>
    <name type="common">European yellow lupine</name>
    <dbReference type="NCBI Taxonomy" id="3873"/>
</organismHost>
<organismHost>
    <name type="scientific">Medicago sativa</name>
    <name type="common">Alfalfa</name>
    <dbReference type="NCBI Taxonomy" id="3879"/>
</organismHost>
<organismHost>
    <name type="scientific">Papaver somniferum</name>
    <name type="common">Opium poppy</name>
    <dbReference type="NCBI Taxonomy" id="3469"/>
</organismHost>
<organismHost>
    <name type="scientific">Phaseolus vulgaris</name>
    <name type="common">Kidney bean</name>
    <name type="synonym">French bean</name>
    <dbReference type="NCBI Taxonomy" id="3885"/>
</organismHost>
<organismHost>
    <name type="scientific">Pisum sativum</name>
    <name type="common">Garden pea</name>
    <name type="synonym">Lathyrus oleraceus</name>
    <dbReference type="NCBI Taxonomy" id="3888"/>
</organismHost>
<organismHost>
    <name type="scientific">Robinia pseudoacacia</name>
    <name type="common">Black locust</name>
    <dbReference type="NCBI Taxonomy" id="35938"/>
</organismHost>
<organismHost>
    <name type="scientific">Trifolium hybridum</name>
    <name type="common">Alsike clover</name>
    <dbReference type="NCBI Taxonomy" id="74517"/>
</organismHost>
<organismHost>
    <name type="scientific">Trifolium incarnatum</name>
    <name type="common">Crimson clover</name>
    <dbReference type="NCBI Taxonomy" id="60916"/>
</organismHost>
<organismHost>
    <name type="scientific">Trifolium pratense</name>
    <name type="common">Red clover</name>
    <dbReference type="NCBI Taxonomy" id="57577"/>
</organismHost>
<organismHost>
    <name type="scientific">Trifolium repens</name>
    <name type="common">Creeping white clover</name>
    <dbReference type="NCBI Taxonomy" id="3899"/>
</organismHost>
<organismHost>
    <name type="scientific">Trifolium subterraneum</name>
    <name type="common">Subterranean clover</name>
    <dbReference type="NCBI Taxonomy" id="3900"/>
</organismHost>
<organismHost>
    <name type="scientific">Trifolium vesiculosum</name>
    <dbReference type="NCBI Taxonomy" id="97047"/>
</organismHost>
<organismHost>
    <name type="scientific">Trigonella foenum-graecum</name>
    <name type="common">Fenugreek</name>
    <dbReference type="NCBI Taxonomy" id="78534"/>
</organismHost>
<organismHost>
    <name type="scientific">Vicia faba</name>
    <name type="common">Broad bean</name>
    <name type="synonym">Faba vulgaris</name>
    <dbReference type="NCBI Taxonomy" id="3906"/>
</organismHost>
<organismHost>
    <name type="scientific">Vicia sativa</name>
    <name type="common">Spring vetch</name>
    <name type="synonym">Tare</name>
    <dbReference type="NCBI Taxonomy" id="3908"/>
</organismHost>
<organism>
    <name type="scientific">Bean yellow mosaic virus</name>
    <dbReference type="NCBI Taxonomy" id="12197"/>
    <lineage>
        <taxon>Viruses</taxon>
        <taxon>Riboviria</taxon>
        <taxon>Orthornavirae</taxon>
        <taxon>Pisuviricota</taxon>
        <taxon>Stelpaviricetes</taxon>
        <taxon>Patatavirales</taxon>
        <taxon>Potyviridae</taxon>
        <taxon>Potyvirus</taxon>
        <taxon>Potyvirus phaseoluteum</taxon>
    </lineage>
</organism>
<keyword id="KW-1031">Host cell junction</keyword>
<keyword id="KW-0945">Host-virus interaction</keyword>
<keyword id="KW-0378">Hydrolase</keyword>
<keyword id="KW-1090">Inhibition of host innate immune response by virus</keyword>
<keyword id="KW-0645">Protease</keyword>
<keyword id="KW-0688">Ribosomal frameshifting</keyword>
<keyword id="KW-0720">Serine protease</keyword>
<keyword id="KW-0941">Suppressor of RNA silencing</keyword>
<keyword id="KW-0813">Transport</keyword>
<keyword id="KW-0899">Viral immunoevasion</keyword>
<keyword id="KW-0916">Viral movement protein</keyword>
<name>MVP_BYMV</name>
<feature type="chain" id="PRO_0000420048" description="P3N-PIPO polyprotein">
    <location>
        <begin position="1"/>
        <end position="975"/>
    </location>
</feature>
<feature type="chain" id="PRO_0000420049" description="P1 protease" evidence="4">
    <location>
        <begin position="1"/>
        <end position="284"/>
    </location>
</feature>
<feature type="chain" id="PRO_0000420050" description="Helper component proteinase" evidence="4">
    <location>
        <begin position="285"/>
        <end position="741"/>
    </location>
</feature>
<feature type="chain" id="PRO_0000408538" description="Movement protein P3N-PIPO">
    <location>
        <begin position="742"/>
        <end position="975"/>
    </location>
</feature>
<feature type="domain" description="Peptidase S30" evidence="6">
    <location>
        <begin position="139"/>
        <end position="284"/>
    </location>
</feature>
<feature type="domain" description="Peptidase C6" evidence="5">
    <location>
        <begin position="619"/>
        <end position="741"/>
    </location>
</feature>
<feature type="short sequence motif" description="Involved in interaction with stylet and aphid transmission" evidence="1">
    <location>
        <begin position="335"/>
        <end position="338"/>
    </location>
</feature>
<feature type="short sequence motif" description="Involved in virions binding and aphid transmission" evidence="1">
    <location>
        <begin position="593"/>
        <end position="595"/>
    </location>
</feature>
<feature type="active site" description="For P1 proteinase activity" evidence="6">
    <location>
        <position position="192"/>
    </location>
</feature>
<feature type="active site" description="For P1 proteinase activity" evidence="6">
    <location>
        <position position="201"/>
    </location>
</feature>
<feature type="active site" description="For P1 proteinase activity" evidence="6">
    <location>
        <position position="232"/>
    </location>
</feature>
<feature type="active site" description="For helper component proteinase activity" evidence="5">
    <location>
        <position position="627"/>
    </location>
</feature>
<feature type="active site" description="For helper component proteinase activity" evidence="5">
    <location>
        <position position="700"/>
    </location>
</feature>
<feature type="site" description="Cleavage; by P1 proteinase" evidence="6">
    <location>
        <begin position="284"/>
        <end position="285"/>
    </location>
</feature>
<feature type="site" description="Cleavage; by autolysis" evidence="5">
    <location>
        <begin position="741"/>
        <end position="742"/>
    </location>
</feature>
<feature type="unsure residue">
    <location>
        <begin position="895"/>
        <end position="901"/>
    </location>
</feature>
<dbReference type="EC" id="3.4.21.-"/>
<dbReference type="EC" id="3.4.22.45"/>
<dbReference type="EMBL" id="AY192568">
    <property type="status" value="NOT_ANNOTATED_CDS"/>
    <property type="molecule type" value="Genomic_RNA"/>
</dbReference>
<dbReference type="SMR" id="P0CJ95"/>
<dbReference type="Proteomes" id="UP000007620">
    <property type="component" value="Genome"/>
</dbReference>
<dbReference type="GO" id="GO:0044219">
    <property type="term" value="C:host cell plasmodesma"/>
    <property type="evidence" value="ECO:0007669"/>
    <property type="project" value="UniProtKB-SubCell"/>
</dbReference>
<dbReference type="GO" id="GO:0004197">
    <property type="term" value="F:cysteine-type endopeptidase activity"/>
    <property type="evidence" value="ECO:0007669"/>
    <property type="project" value="InterPro"/>
</dbReference>
<dbReference type="GO" id="GO:0008236">
    <property type="term" value="F:serine-type peptidase activity"/>
    <property type="evidence" value="ECO:0007669"/>
    <property type="project" value="UniProtKB-KW"/>
</dbReference>
<dbReference type="GO" id="GO:0006508">
    <property type="term" value="P:proteolysis"/>
    <property type="evidence" value="ECO:0007669"/>
    <property type="project" value="UniProtKB-KW"/>
</dbReference>
<dbReference type="GO" id="GO:0052170">
    <property type="term" value="P:symbiont-mediated suppression of host innate immune response"/>
    <property type="evidence" value="ECO:0007669"/>
    <property type="project" value="UniProtKB-KW"/>
</dbReference>
<dbReference type="GO" id="GO:0046740">
    <property type="term" value="P:transport of virus in host, cell to cell"/>
    <property type="evidence" value="ECO:0007669"/>
    <property type="project" value="UniProtKB-KW"/>
</dbReference>
<dbReference type="GO" id="GO:0075523">
    <property type="term" value="P:viral translational frameshifting"/>
    <property type="evidence" value="ECO:0007669"/>
    <property type="project" value="UniProtKB-KW"/>
</dbReference>
<dbReference type="Gene3D" id="3.90.70.150">
    <property type="entry name" value="Helper component proteinase"/>
    <property type="match status" value="1"/>
</dbReference>
<dbReference type="InterPro" id="IPR001456">
    <property type="entry name" value="HC-pro"/>
</dbReference>
<dbReference type="InterPro" id="IPR031159">
    <property type="entry name" value="HC_PRO_CPD_dom"/>
</dbReference>
<dbReference type="InterPro" id="IPR042308">
    <property type="entry name" value="HC_PRO_CPD_sf"/>
</dbReference>
<dbReference type="InterPro" id="IPR002540">
    <property type="entry name" value="Pept_S30_P1_potyvir"/>
</dbReference>
<dbReference type="InterPro" id="IPR039560">
    <property type="entry name" value="Potyvirid-P3"/>
</dbReference>
<dbReference type="Pfam" id="PF00851">
    <property type="entry name" value="Peptidase_C6"/>
    <property type="match status" value="1"/>
</dbReference>
<dbReference type="Pfam" id="PF01577">
    <property type="entry name" value="Peptidase_S30"/>
    <property type="match status" value="1"/>
</dbReference>
<dbReference type="Pfam" id="PF13608">
    <property type="entry name" value="Potyvirid-P3"/>
    <property type="match status" value="1"/>
</dbReference>
<dbReference type="PROSITE" id="PS51744">
    <property type="entry name" value="HC_PRO_CPD"/>
    <property type="match status" value="1"/>
</dbReference>
<dbReference type="PROSITE" id="PS51871">
    <property type="entry name" value="PV_P1_PRO"/>
    <property type="match status" value="1"/>
</dbReference>
<comment type="function">
    <molecule>Helper component proteinase</molecule>
    <text evidence="2">Required for aphid transmission and also has proteolytic activity. Only cleaves a Gly-Gly dipeptide at its own C-terminus. Interacts with virions and aphid stylets. Acts as a suppressor of RNA-mediated gene silencing, also known as post-transcriptional gene silencing (PTGS), a mechanism of plant viral defense that limits the accumulation of viral RNAs. May have RNA-binding activity.</text>
</comment>
<comment type="function">
    <molecule>Movement protein P3N-PIPO</molecule>
    <text evidence="3">Allows efficient cell to cell propagation, by bypassing the host cell wall barrier. Transports viral genome to neighboring plant cells directly through plasmosdesmata, without any budding.</text>
</comment>
<comment type="catalytic activity">
    <molecule>Helper component proteinase</molecule>
    <reaction>
        <text>Hydrolyzes a Gly-|-Gly bond at its own C-terminus, commonly in the sequence -Tyr-Xaa-Val-Gly-|-Gly, in the processing of the potyviral polyprotein.</text>
        <dbReference type="EC" id="3.4.22.45"/>
    </reaction>
</comment>
<comment type="subunit">
    <molecule>Movement protein P3N-PIPO</molecule>
    <text evidence="3">Interacts (via PIPO domain) with host PCaP1 protein; this interaction may help to anchor the movement complex to the plasma membrane from which the complex could move to the plasmodesmata.</text>
</comment>
<comment type="subcellular location">
    <molecule>Movement protein P3N-PIPO</molecule>
    <subcellularLocation>
        <location evidence="3">Host cell junction</location>
        <location evidence="3">Host plasmodesma</location>
    </subcellularLocation>
</comment>
<comment type="alternative products">
    <event type="ribosomal frameshifting"/>
    <isoform>
        <id>P0CJ95-1</id>
        <name>P3N-PIPO polyprotein</name>
        <sequence type="displayed"/>
    </isoform>
    <isoform>
        <id>P17765-1</id>
        <name>Genome polyprotein</name>
        <sequence type="external"/>
    </isoform>
</comment>
<comment type="domain">
    <text evidence="1">The N-terminus of helper component proteinase is involved in interaction with stylets. The central part is involved in interaction with virions and the C-terminus is involved in cell-to cell movement of the virus (By similarity).</text>
</comment>
<comment type="PTM">
    <text evidence="1">Potyviral RNA is expressed as two polyproteins which undergo post-translational proteolytic processing. Genome polyprotein is processed by NIa-pro, P1 and HC-pro proteinases resulting in the production of at least ten individual proteins. P3N-PIPO is cleaved by P1 and HC-pro proteinases resulting in the production of three individual proteins. The P1 proteinase and the HC-pro cleave only their respective C-termini autocatalytically (By similarity).</text>
</comment>
<comment type="miscellaneous">
    <molecule>Isoform P3N-PIPO polyprotein</molecule>
    <text>Produced by -1 ribosomal frameshifting in P3 ORF.</text>
</comment>
<comment type="similarity">
    <text evidence="7">Belongs to the potyviridae P3N-PIPO polyprotein family.</text>
</comment>
<protein>
    <recommendedName>
        <fullName>P3N-PIPO polyprotein</fullName>
    </recommendedName>
    <component>
        <recommendedName>
            <fullName>P1 protease</fullName>
            <ecNumber>3.4.21.-</ecNumber>
        </recommendedName>
        <alternativeName>
            <fullName>N-terminal protein</fullName>
        </alternativeName>
        <alternativeName>
            <fullName>P1 proteinase</fullName>
        </alternativeName>
    </component>
    <component>
        <recommendedName>
            <fullName>Helper component proteinase</fullName>
            <shortName>HC-pro</shortName>
            <ecNumber>3.4.22.45</ecNumber>
        </recommendedName>
    </component>
    <component>
        <recommendedName>
            <fullName>Movement protein P3N-PIPO</fullName>
        </recommendedName>
        <alternativeName>
            <fullName>Pretty interesting potyviridae ORF</fullName>
            <shortName>PIPO</shortName>
        </alternativeName>
    </component>
</protein>
<sequence>MTTINIGTIPVVINQNADTQMGEGTKNIFPIVKDFVDPFADLEMRCAERVKRMGELCFSKKGRYITMIPKPDYIKAREKEQREEELNFQNSEHVLNSLDTTCTPEHHSSRNNGMQVSFKTQHYKRTFRKPRIQAKKRDLKGQHTIHYVAKELLSIVKKRDMVLEVVDKRKHANFATFRRYGKTYGMHITLNHMVRKRRRVDVTLNKLMTEIAMHCAIPFECLNTLTLRKGHSGLVLQTETVPNVHKIKSKITIVRGVVNEGNIPVLIDARKKLSGRDMSTIREFSAGDLFWKGYNQTFIDNRPTDLNHQCTSDLNVTQCGSVMALLTLALFPCGRITCKKCVENFLNQNNKERFNNASVFINQVIQLLEKGFSEFKHSKEILLMFKERLQMENPATDQCMEIAKATAALPEAPFSHIKEINNVLLKYGSLSNEEVGGASKHLLEVVRYIRNRTDSIQRNDLSKFRNKISSKTHINLDLMCDNQLDKNANFVWGQRAYHAKRFLSNYFNEINPSEGYDKFIFRKLPNGARELAIGRLIMPTNFEAFREQMKGKMIDNGPIGKDCVSRMRGSFCYPCCCTTDDVGTAVISDFKMPTKYHLVLGGNDLAKYIKLPTDTTGNMYIAKDGFCHINIFFAMLVNVSEEKSKDFTKMVRDQIMPKLGEWPTMMDVATACWQLTVWFPDTLSAELPRILVDHKLGIMHVLDSYGSISAGYHVLKANIVSQLIKFASDDLESELKYYRVGGDCNFGSRVRIDTKFLLKSIYRPDLLERIIEHEPFVLVLAMQSPAVLLALFNSASLEKAVQYWMHREMQVSHIMTLLAVLASNVSASKLLTTQFEIIEASAPQILAEMDKVHLPMHSIHSANVFLMNMSESRETDKTIDELGFYSFKKSSRILMEKNLNGGFGGAMARIRIVGTVVFNKAVVASASKIFKLCNPTRRARYKRQVHNLTQVIRGSDKTTVTCSEGSGCPFCRKED</sequence>
<accession>P0CJ95</accession>
<evidence type="ECO:0000250" key="1"/>
<evidence type="ECO:0000250" key="2">
    <source>
        <dbReference type="UniProtKB" id="P04517"/>
    </source>
</evidence>
<evidence type="ECO:0000250" key="3">
    <source>
        <dbReference type="UniProtKB" id="P0CK11"/>
    </source>
</evidence>
<evidence type="ECO:0000255" key="4"/>
<evidence type="ECO:0000255" key="5">
    <source>
        <dbReference type="PROSITE-ProRule" id="PRU01080"/>
    </source>
</evidence>
<evidence type="ECO:0000255" key="6">
    <source>
        <dbReference type="PROSITE-ProRule" id="PRU01219"/>
    </source>
</evidence>
<evidence type="ECO:0000305" key="7"/>
<reference key="1">
    <citation type="journal article" date="2003" name="Arch. Virol.">
        <title>The complete nucleotide sequence of isolate BYMV-GDD of Bean yellow mosaic virus, and comparison to other potyviruses.</title>
        <authorList>
            <person name="Hammond J."/>
            <person name="Hammond R.W."/>
        </authorList>
    </citation>
    <scope>NUCLEOTIDE SEQUENCE [GENOMIC RNA]</scope>
    <source>
        <strain>Isolate GDD</strain>
    </source>
</reference>